<organism>
    <name type="scientific">Pongo abelii</name>
    <name type="common">Sumatran orangutan</name>
    <name type="synonym">Pongo pygmaeus abelii</name>
    <dbReference type="NCBI Taxonomy" id="9601"/>
    <lineage>
        <taxon>Eukaryota</taxon>
        <taxon>Metazoa</taxon>
        <taxon>Chordata</taxon>
        <taxon>Craniata</taxon>
        <taxon>Vertebrata</taxon>
        <taxon>Euteleostomi</taxon>
        <taxon>Mammalia</taxon>
        <taxon>Eutheria</taxon>
        <taxon>Euarchontoglires</taxon>
        <taxon>Primates</taxon>
        <taxon>Haplorrhini</taxon>
        <taxon>Catarrhini</taxon>
        <taxon>Hominidae</taxon>
        <taxon>Pongo</taxon>
    </lineage>
</organism>
<dbReference type="EC" id="3.1.3.2"/>
<dbReference type="EMBL" id="CR926080">
    <property type="protein sequence ID" value="CAI29707.1"/>
    <property type="molecule type" value="mRNA"/>
</dbReference>
<dbReference type="RefSeq" id="NP_001127113.1">
    <property type="nucleotide sequence ID" value="NM_001133641.1"/>
</dbReference>
<dbReference type="BMRB" id="Q5NVF6"/>
<dbReference type="SMR" id="Q5NVF6"/>
<dbReference type="FunCoup" id="Q5NVF6">
    <property type="interactions" value="1374"/>
</dbReference>
<dbReference type="STRING" id="9601.ENSPPYP00000003798"/>
<dbReference type="GlyCosmos" id="Q5NVF6">
    <property type="glycosylation" value="8 sites, No reported glycans"/>
</dbReference>
<dbReference type="Ensembl" id="ENSPPYT00000003945.2">
    <property type="protein sequence ID" value="ENSPPYP00000003798.1"/>
    <property type="gene ID" value="ENSPPYG00000003310.2"/>
</dbReference>
<dbReference type="GeneID" id="100174154"/>
<dbReference type="KEGG" id="pon:100174154"/>
<dbReference type="CTD" id="53"/>
<dbReference type="eggNOG" id="KOG3720">
    <property type="taxonomic scope" value="Eukaryota"/>
</dbReference>
<dbReference type="GeneTree" id="ENSGT00940000158446"/>
<dbReference type="HOGENOM" id="CLU_030431_0_0_1"/>
<dbReference type="InParanoid" id="Q5NVF6"/>
<dbReference type="OMA" id="DPHQESD"/>
<dbReference type="OrthoDB" id="258392at2759"/>
<dbReference type="TreeFam" id="TF312893"/>
<dbReference type="Proteomes" id="UP000001595">
    <property type="component" value="Chromosome 11"/>
</dbReference>
<dbReference type="GO" id="GO:0043202">
    <property type="term" value="C:lysosomal lumen"/>
    <property type="evidence" value="ECO:0007669"/>
    <property type="project" value="UniProtKB-SubCell"/>
</dbReference>
<dbReference type="GO" id="GO:0005765">
    <property type="term" value="C:lysosomal membrane"/>
    <property type="evidence" value="ECO:0007669"/>
    <property type="project" value="UniProtKB-SubCell"/>
</dbReference>
<dbReference type="GO" id="GO:0003993">
    <property type="term" value="F:acid phosphatase activity"/>
    <property type="evidence" value="ECO:0007669"/>
    <property type="project" value="UniProtKB-EC"/>
</dbReference>
<dbReference type="GO" id="GO:0007040">
    <property type="term" value="P:lysosome organization"/>
    <property type="evidence" value="ECO:0007669"/>
    <property type="project" value="Ensembl"/>
</dbReference>
<dbReference type="GO" id="GO:0001501">
    <property type="term" value="P:skeletal system development"/>
    <property type="evidence" value="ECO:0007669"/>
    <property type="project" value="Ensembl"/>
</dbReference>
<dbReference type="CDD" id="cd07061">
    <property type="entry name" value="HP_HAP_like"/>
    <property type="match status" value="1"/>
</dbReference>
<dbReference type="FunFam" id="3.40.50.1240:FF:000010">
    <property type="entry name" value="Prostatic acid phosphatase"/>
    <property type="match status" value="1"/>
</dbReference>
<dbReference type="Gene3D" id="3.40.50.1240">
    <property type="entry name" value="Phosphoglycerate mutase-like"/>
    <property type="match status" value="1"/>
</dbReference>
<dbReference type="InterPro" id="IPR033379">
    <property type="entry name" value="Acid_Pase_AS"/>
</dbReference>
<dbReference type="InterPro" id="IPR000560">
    <property type="entry name" value="His_Pase_clade-2"/>
</dbReference>
<dbReference type="InterPro" id="IPR029033">
    <property type="entry name" value="His_PPase_superfam"/>
</dbReference>
<dbReference type="InterPro" id="IPR050645">
    <property type="entry name" value="Histidine_acid_phosphatase"/>
</dbReference>
<dbReference type="PANTHER" id="PTHR11567">
    <property type="entry name" value="ACID PHOSPHATASE-RELATED"/>
    <property type="match status" value="1"/>
</dbReference>
<dbReference type="PANTHER" id="PTHR11567:SF180">
    <property type="entry name" value="LYSOSOMAL ACID PHOSPHATASE"/>
    <property type="match status" value="1"/>
</dbReference>
<dbReference type="Pfam" id="PF00328">
    <property type="entry name" value="His_Phos_2"/>
    <property type="match status" value="1"/>
</dbReference>
<dbReference type="SUPFAM" id="SSF53254">
    <property type="entry name" value="Phosphoglycerate mutase-like"/>
    <property type="match status" value="1"/>
</dbReference>
<dbReference type="PROSITE" id="PS00616">
    <property type="entry name" value="HIS_ACID_PHOSPHAT_1"/>
    <property type="match status" value="1"/>
</dbReference>
<dbReference type="PROSITE" id="PS00778">
    <property type="entry name" value="HIS_ACID_PHOSPHAT_2"/>
    <property type="match status" value="1"/>
</dbReference>
<accession>Q5NVF6</accession>
<sequence>MAGKRSGWSRAALLQLLLGVNLVVMPPTQARSLRFVTLLYRHGDRSPVKTYPKDPYQEEEWPQGFGQLTKEGMLQHWELGQALRQRYHGFLNTSYHRQEVYVRSTDFDRTLMSAEANLAGLFPPNGMQRFNPNISWQPIPVHTVPITEDRLLKFPLGPCPRYEQLQNETRQTPEYQNESSRNAQFLDMVANETGLTDLTLETVWNVYDTLFCEQTHGLRLPPWASPQTMQRLSRLKDFSFRFLFGIYQQAEKARLQGGVLLAQIRKNLTLMATTSQLPKLLVYSAHDTTLVALQMALDVYNGEQAPYASCHIFELYQEDSGNFSVEMYFRNESDKAPWPLSLPGCPHRCPLQDFLRLTEPVVPKDWQQECQVASGPADTEVIVALAVCGSILFLLIVLLLTVLFRMQAQPPGYRHVADGEDHA</sequence>
<feature type="signal peptide" evidence="1">
    <location>
        <begin position="1"/>
        <end position="30"/>
    </location>
</feature>
<feature type="chain" id="PRO_0000352522" description="Lysosomal acid phosphatase">
    <location>
        <begin position="31"/>
        <end position="423"/>
    </location>
</feature>
<feature type="topological domain" description="Lumenal" evidence="3">
    <location>
        <begin position="31"/>
        <end position="380"/>
    </location>
</feature>
<feature type="transmembrane region" description="Helical" evidence="3">
    <location>
        <begin position="381"/>
        <end position="401"/>
    </location>
</feature>
<feature type="topological domain" description="Cytoplasmic" evidence="3">
    <location>
        <begin position="402"/>
        <end position="423"/>
    </location>
</feature>
<feature type="active site" description="Nucleophile" evidence="1">
    <location>
        <position position="42"/>
    </location>
</feature>
<feature type="active site" description="Proton donor" evidence="1">
    <location>
        <position position="287"/>
    </location>
</feature>
<feature type="glycosylation site" description="N-linked (GlcNAc...) asparagine" evidence="3">
    <location>
        <position position="92"/>
    </location>
</feature>
<feature type="glycosylation site" description="N-linked (GlcNAc...) asparagine" evidence="3">
    <location>
        <position position="133"/>
    </location>
</feature>
<feature type="glycosylation site" description="N-linked (GlcNAc...) asparagine" evidence="3">
    <location>
        <position position="167"/>
    </location>
</feature>
<feature type="glycosylation site" description="N-linked (GlcNAc...) asparagine" evidence="3">
    <location>
        <position position="177"/>
    </location>
</feature>
<feature type="glycosylation site" description="N-linked (GlcNAc...) asparagine" evidence="3">
    <location>
        <position position="191"/>
    </location>
</feature>
<feature type="glycosylation site" description="N-linked (GlcNAc...) asparagine" evidence="3">
    <location>
        <position position="267"/>
    </location>
</feature>
<feature type="glycosylation site" description="N-linked (GlcNAc...) asparagine" evidence="3">
    <location>
        <position position="322"/>
    </location>
</feature>
<feature type="glycosylation site" description="N-linked (GlcNAc...) asparagine" evidence="3">
    <location>
        <position position="331"/>
    </location>
</feature>
<feature type="disulfide bond" evidence="1">
    <location>
        <begin position="159"/>
        <end position="370"/>
    </location>
</feature>
<feature type="disulfide bond" evidence="1">
    <location>
        <begin position="212"/>
        <end position="310"/>
    </location>
</feature>
<feature type="disulfide bond" evidence="1">
    <location>
        <begin position="345"/>
        <end position="349"/>
    </location>
</feature>
<protein>
    <recommendedName>
        <fullName>Lysosomal acid phosphatase</fullName>
        <shortName>LAP</shortName>
        <ecNumber>3.1.3.2</ecNumber>
    </recommendedName>
</protein>
<comment type="catalytic activity">
    <reaction>
        <text>a phosphate monoester + H2O = an alcohol + phosphate</text>
        <dbReference type="Rhea" id="RHEA:15017"/>
        <dbReference type="ChEBI" id="CHEBI:15377"/>
        <dbReference type="ChEBI" id="CHEBI:30879"/>
        <dbReference type="ChEBI" id="CHEBI:43474"/>
        <dbReference type="ChEBI" id="CHEBI:67140"/>
        <dbReference type="EC" id="3.1.3.2"/>
    </reaction>
</comment>
<comment type="subcellular location">
    <subcellularLocation>
        <location evidence="2">Lysosome membrane</location>
        <topology evidence="3">Single-pass membrane protein</topology>
        <orientation evidence="2">Lumenal side</orientation>
    </subcellularLocation>
    <subcellularLocation>
        <location evidence="2">Lysosome lumen</location>
    </subcellularLocation>
    <text evidence="2">The soluble form arises by proteolytic processing of the membrane-bound form.</text>
</comment>
<comment type="PTM">
    <text evidence="1">The membrane-bound form is converted to the soluble form by sequential proteolytic processing. First, the C-terminal cytoplasmic tail is removed. Cleavage by a lysosomal protease releases the soluble form in the lysosome lumen (By similarity).</text>
</comment>
<comment type="similarity">
    <text evidence="4">Belongs to the histidine acid phosphatase family.</text>
</comment>
<keyword id="KW-1015">Disulfide bond</keyword>
<keyword id="KW-0325">Glycoprotein</keyword>
<keyword id="KW-0378">Hydrolase</keyword>
<keyword id="KW-0458">Lysosome</keyword>
<keyword id="KW-0472">Membrane</keyword>
<keyword id="KW-1185">Reference proteome</keyword>
<keyword id="KW-0732">Signal</keyword>
<keyword id="KW-0812">Transmembrane</keyword>
<keyword id="KW-1133">Transmembrane helix</keyword>
<evidence type="ECO:0000250" key="1"/>
<evidence type="ECO:0000250" key="2">
    <source>
        <dbReference type="UniProtKB" id="P11117"/>
    </source>
</evidence>
<evidence type="ECO:0000255" key="3"/>
<evidence type="ECO:0000305" key="4"/>
<reference key="1">
    <citation type="submission" date="2004-11" db="EMBL/GenBank/DDBJ databases">
        <authorList>
            <consortium name="The German cDNA consortium"/>
        </authorList>
    </citation>
    <scope>NUCLEOTIDE SEQUENCE [LARGE SCALE MRNA]</scope>
    <source>
        <tissue>Brain cortex</tissue>
    </source>
</reference>
<gene>
    <name type="primary">ACP2</name>
</gene>
<proteinExistence type="evidence at transcript level"/>
<name>PPAL_PONAB</name>